<keyword id="KW-0413">Isomerase</keyword>
<keyword id="KW-0819">tRNA processing</keyword>
<gene>
    <name evidence="1" type="primary">truB</name>
    <name type="ordered locus">XC_1607</name>
</gene>
<feature type="chain" id="PRO_0000229393" description="tRNA pseudouridine synthase B">
    <location>
        <begin position="1"/>
        <end position="308"/>
    </location>
</feature>
<feature type="active site" description="Nucleophile" evidence="1">
    <location>
        <position position="47"/>
    </location>
</feature>
<sequence>MRPRITFRPLHGILLLDKPAGLSSNNALQAARRLLRAEKGGHTGSLDPLATGLLPLCFGEATKIAGLLLGSAKAYDAEIVLGVTTDTDDADGQPLRERSVPALSEAALQAALAPFIGRIQQQAPIYSALKQGGEPLYAKARRGEVIEAPVREVEVHAITLTSYASPRLRLRVTCGSGTYIRSLARDLGEVLGCGAHIAALRRVWVEPFRTPEMITLEALTALVESGADAAQLLLPVAAGLSDFAQITLDATLAARFRMGQRLRDPAFPEGQVAVFDADGSPAGLGLVDADGRLSPQRLFNGLNAAAAC</sequence>
<comment type="function">
    <text evidence="1">Responsible for synthesis of pseudouridine from uracil-55 in the psi GC loop of transfer RNAs.</text>
</comment>
<comment type="catalytic activity">
    <reaction evidence="1">
        <text>uridine(55) in tRNA = pseudouridine(55) in tRNA</text>
        <dbReference type="Rhea" id="RHEA:42532"/>
        <dbReference type="Rhea" id="RHEA-COMP:10101"/>
        <dbReference type="Rhea" id="RHEA-COMP:10102"/>
        <dbReference type="ChEBI" id="CHEBI:65314"/>
        <dbReference type="ChEBI" id="CHEBI:65315"/>
        <dbReference type="EC" id="5.4.99.25"/>
    </reaction>
</comment>
<comment type="similarity">
    <text evidence="1">Belongs to the pseudouridine synthase TruB family. Type 1 subfamily.</text>
</comment>
<organism>
    <name type="scientific">Xanthomonas campestris pv. campestris (strain 8004)</name>
    <dbReference type="NCBI Taxonomy" id="314565"/>
    <lineage>
        <taxon>Bacteria</taxon>
        <taxon>Pseudomonadati</taxon>
        <taxon>Pseudomonadota</taxon>
        <taxon>Gammaproteobacteria</taxon>
        <taxon>Lysobacterales</taxon>
        <taxon>Lysobacteraceae</taxon>
        <taxon>Xanthomonas</taxon>
    </lineage>
</organism>
<name>TRUB_XANC8</name>
<dbReference type="EC" id="5.4.99.25" evidence="1"/>
<dbReference type="EMBL" id="CP000050">
    <property type="protein sequence ID" value="AAY48673.1"/>
    <property type="molecule type" value="Genomic_DNA"/>
</dbReference>
<dbReference type="RefSeq" id="WP_011037642.1">
    <property type="nucleotide sequence ID" value="NZ_CP155948.1"/>
</dbReference>
<dbReference type="SMR" id="Q4UWA0"/>
<dbReference type="KEGG" id="xcb:XC_1607"/>
<dbReference type="HOGENOM" id="CLU_032087_0_3_6"/>
<dbReference type="Proteomes" id="UP000000420">
    <property type="component" value="Chromosome"/>
</dbReference>
<dbReference type="GO" id="GO:0003723">
    <property type="term" value="F:RNA binding"/>
    <property type="evidence" value="ECO:0007669"/>
    <property type="project" value="InterPro"/>
</dbReference>
<dbReference type="GO" id="GO:0160148">
    <property type="term" value="F:tRNA pseudouridine(55) synthase activity"/>
    <property type="evidence" value="ECO:0007669"/>
    <property type="project" value="UniProtKB-EC"/>
</dbReference>
<dbReference type="GO" id="GO:1990481">
    <property type="term" value="P:mRNA pseudouridine synthesis"/>
    <property type="evidence" value="ECO:0007669"/>
    <property type="project" value="TreeGrafter"/>
</dbReference>
<dbReference type="GO" id="GO:0031119">
    <property type="term" value="P:tRNA pseudouridine synthesis"/>
    <property type="evidence" value="ECO:0007669"/>
    <property type="project" value="UniProtKB-UniRule"/>
</dbReference>
<dbReference type="CDD" id="cd02573">
    <property type="entry name" value="PseudoU_synth_EcTruB"/>
    <property type="match status" value="1"/>
</dbReference>
<dbReference type="CDD" id="cd21152">
    <property type="entry name" value="PUA_TruB_bacterial"/>
    <property type="match status" value="1"/>
</dbReference>
<dbReference type="FunFam" id="3.30.2350.10:FF:000011">
    <property type="entry name" value="tRNA pseudouridine synthase B"/>
    <property type="match status" value="1"/>
</dbReference>
<dbReference type="Gene3D" id="3.30.2350.10">
    <property type="entry name" value="Pseudouridine synthase"/>
    <property type="match status" value="1"/>
</dbReference>
<dbReference type="Gene3D" id="2.30.130.10">
    <property type="entry name" value="PUA domain"/>
    <property type="match status" value="1"/>
</dbReference>
<dbReference type="HAMAP" id="MF_01080">
    <property type="entry name" value="TruB_bact"/>
    <property type="match status" value="1"/>
</dbReference>
<dbReference type="InterPro" id="IPR020103">
    <property type="entry name" value="PsdUridine_synth_cat_dom_sf"/>
</dbReference>
<dbReference type="InterPro" id="IPR002501">
    <property type="entry name" value="PsdUridine_synth_N"/>
</dbReference>
<dbReference type="InterPro" id="IPR015947">
    <property type="entry name" value="PUA-like_sf"/>
</dbReference>
<dbReference type="InterPro" id="IPR036974">
    <property type="entry name" value="PUA_sf"/>
</dbReference>
<dbReference type="InterPro" id="IPR014780">
    <property type="entry name" value="tRNA_psdUridine_synth_TruB"/>
</dbReference>
<dbReference type="InterPro" id="IPR015240">
    <property type="entry name" value="tRNA_sdUridine_synth_fam1_C"/>
</dbReference>
<dbReference type="InterPro" id="IPR032819">
    <property type="entry name" value="TruB_C"/>
</dbReference>
<dbReference type="NCBIfam" id="TIGR00431">
    <property type="entry name" value="TruB"/>
    <property type="match status" value="1"/>
</dbReference>
<dbReference type="PANTHER" id="PTHR13767:SF2">
    <property type="entry name" value="PSEUDOURIDYLATE SYNTHASE TRUB1"/>
    <property type="match status" value="1"/>
</dbReference>
<dbReference type="PANTHER" id="PTHR13767">
    <property type="entry name" value="TRNA-PSEUDOURIDINE SYNTHASE"/>
    <property type="match status" value="1"/>
</dbReference>
<dbReference type="Pfam" id="PF09157">
    <property type="entry name" value="TruB-C_2"/>
    <property type="match status" value="1"/>
</dbReference>
<dbReference type="Pfam" id="PF16198">
    <property type="entry name" value="TruB_C_2"/>
    <property type="match status" value="1"/>
</dbReference>
<dbReference type="Pfam" id="PF01509">
    <property type="entry name" value="TruB_N"/>
    <property type="match status" value="1"/>
</dbReference>
<dbReference type="SUPFAM" id="SSF55120">
    <property type="entry name" value="Pseudouridine synthase"/>
    <property type="match status" value="1"/>
</dbReference>
<dbReference type="SUPFAM" id="SSF88697">
    <property type="entry name" value="PUA domain-like"/>
    <property type="match status" value="1"/>
</dbReference>
<evidence type="ECO:0000255" key="1">
    <source>
        <dbReference type="HAMAP-Rule" id="MF_01080"/>
    </source>
</evidence>
<proteinExistence type="inferred from homology"/>
<accession>Q4UWA0</accession>
<reference key="1">
    <citation type="journal article" date="2005" name="Genome Res.">
        <title>Comparative and functional genomic analyses of the pathogenicity of phytopathogen Xanthomonas campestris pv. campestris.</title>
        <authorList>
            <person name="Qian W."/>
            <person name="Jia Y."/>
            <person name="Ren S.-X."/>
            <person name="He Y.-Q."/>
            <person name="Feng J.-X."/>
            <person name="Lu L.-F."/>
            <person name="Sun Q."/>
            <person name="Ying G."/>
            <person name="Tang D.-J."/>
            <person name="Tang H."/>
            <person name="Wu W."/>
            <person name="Hao P."/>
            <person name="Wang L."/>
            <person name="Jiang B.-L."/>
            <person name="Zeng S."/>
            <person name="Gu W.-Y."/>
            <person name="Lu G."/>
            <person name="Rong L."/>
            <person name="Tian Y."/>
            <person name="Yao Z."/>
            <person name="Fu G."/>
            <person name="Chen B."/>
            <person name="Fang R."/>
            <person name="Qiang B."/>
            <person name="Chen Z."/>
            <person name="Zhao G.-P."/>
            <person name="Tang J.-L."/>
            <person name="He C."/>
        </authorList>
    </citation>
    <scope>NUCLEOTIDE SEQUENCE [LARGE SCALE GENOMIC DNA]</scope>
    <source>
        <strain>8004</strain>
    </source>
</reference>
<protein>
    <recommendedName>
        <fullName evidence="1">tRNA pseudouridine synthase B</fullName>
        <ecNumber evidence="1">5.4.99.25</ecNumber>
    </recommendedName>
    <alternativeName>
        <fullName evidence="1">tRNA pseudouridine(55) synthase</fullName>
        <shortName evidence="1">Psi55 synthase</shortName>
    </alternativeName>
    <alternativeName>
        <fullName evidence="1">tRNA pseudouridylate synthase</fullName>
    </alternativeName>
    <alternativeName>
        <fullName evidence="1">tRNA-uridine isomerase</fullName>
    </alternativeName>
</protein>